<name>RL35_AZOVD</name>
<protein>
    <recommendedName>
        <fullName evidence="1">Large ribosomal subunit protein bL35</fullName>
    </recommendedName>
    <alternativeName>
        <fullName evidence="3">50S ribosomal protein L35</fullName>
    </alternativeName>
</protein>
<feature type="chain" id="PRO_1000211691" description="Large ribosomal subunit protein bL35">
    <location>
        <begin position="1"/>
        <end position="64"/>
    </location>
</feature>
<feature type="region of interest" description="Disordered" evidence="2">
    <location>
        <begin position="1"/>
        <end position="27"/>
    </location>
</feature>
<keyword id="KW-0687">Ribonucleoprotein</keyword>
<keyword id="KW-0689">Ribosomal protein</keyword>
<evidence type="ECO:0000255" key="1">
    <source>
        <dbReference type="HAMAP-Rule" id="MF_00514"/>
    </source>
</evidence>
<evidence type="ECO:0000256" key="2">
    <source>
        <dbReference type="SAM" id="MobiDB-lite"/>
    </source>
</evidence>
<evidence type="ECO:0000305" key="3"/>
<proteinExistence type="inferred from homology"/>
<dbReference type="EMBL" id="CP001157">
    <property type="protein sequence ID" value="ACO78247.1"/>
    <property type="molecule type" value="Genomic_DNA"/>
</dbReference>
<dbReference type="RefSeq" id="WP_012700656.1">
    <property type="nucleotide sequence ID" value="NC_012560.1"/>
</dbReference>
<dbReference type="SMR" id="C1DF44"/>
<dbReference type="STRING" id="322710.Avin_20440"/>
<dbReference type="EnsemblBacteria" id="ACO78247">
    <property type="protein sequence ID" value="ACO78247"/>
    <property type="gene ID" value="Avin_20440"/>
</dbReference>
<dbReference type="GeneID" id="88185275"/>
<dbReference type="KEGG" id="avn:Avin_20440"/>
<dbReference type="eggNOG" id="COG0291">
    <property type="taxonomic scope" value="Bacteria"/>
</dbReference>
<dbReference type="HOGENOM" id="CLU_169643_1_1_6"/>
<dbReference type="OrthoDB" id="47476at2"/>
<dbReference type="Proteomes" id="UP000002424">
    <property type="component" value="Chromosome"/>
</dbReference>
<dbReference type="GO" id="GO:0022625">
    <property type="term" value="C:cytosolic large ribosomal subunit"/>
    <property type="evidence" value="ECO:0007669"/>
    <property type="project" value="TreeGrafter"/>
</dbReference>
<dbReference type="GO" id="GO:0003735">
    <property type="term" value="F:structural constituent of ribosome"/>
    <property type="evidence" value="ECO:0007669"/>
    <property type="project" value="InterPro"/>
</dbReference>
<dbReference type="GO" id="GO:0006412">
    <property type="term" value="P:translation"/>
    <property type="evidence" value="ECO:0007669"/>
    <property type="project" value="UniProtKB-UniRule"/>
</dbReference>
<dbReference type="FunFam" id="4.10.410.60:FF:000001">
    <property type="entry name" value="50S ribosomal protein L35"/>
    <property type="match status" value="1"/>
</dbReference>
<dbReference type="Gene3D" id="4.10.410.60">
    <property type="match status" value="1"/>
</dbReference>
<dbReference type="HAMAP" id="MF_00514">
    <property type="entry name" value="Ribosomal_bL35"/>
    <property type="match status" value="1"/>
</dbReference>
<dbReference type="InterPro" id="IPR001706">
    <property type="entry name" value="Ribosomal_bL35"/>
</dbReference>
<dbReference type="InterPro" id="IPR021137">
    <property type="entry name" value="Ribosomal_bL35-like"/>
</dbReference>
<dbReference type="InterPro" id="IPR018265">
    <property type="entry name" value="Ribosomal_bL35_CS"/>
</dbReference>
<dbReference type="InterPro" id="IPR037229">
    <property type="entry name" value="Ribosomal_bL35_sf"/>
</dbReference>
<dbReference type="NCBIfam" id="TIGR00001">
    <property type="entry name" value="rpmI_bact"/>
    <property type="match status" value="1"/>
</dbReference>
<dbReference type="PANTHER" id="PTHR33343">
    <property type="entry name" value="54S RIBOSOMAL PROTEIN BL35M"/>
    <property type="match status" value="1"/>
</dbReference>
<dbReference type="PANTHER" id="PTHR33343:SF1">
    <property type="entry name" value="LARGE RIBOSOMAL SUBUNIT PROTEIN BL35M"/>
    <property type="match status" value="1"/>
</dbReference>
<dbReference type="Pfam" id="PF01632">
    <property type="entry name" value="Ribosomal_L35p"/>
    <property type="match status" value="1"/>
</dbReference>
<dbReference type="PRINTS" id="PR00064">
    <property type="entry name" value="RIBOSOMALL35"/>
</dbReference>
<dbReference type="SUPFAM" id="SSF143034">
    <property type="entry name" value="L35p-like"/>
    <property type="match status" value="1"/>
</dbReference>
<dbReference type="PROSITE" id="PS00936">
    <property type="entry name" value="RIBOSOMAL_L35"/>
    <property type="match status" value="1"/>
</dbReference>
<reference key="1">
    <citation type="journal article" date="2009" name="J. Bacteriol.">
        <title>Genome sequence of Azotobacter vinelandii, an obligate aerobe specialized to support diverse anaerobic metabolic processes.</title>
        <authorList>
            <person name="Setubal J.C."/>
            <person name="Dos Santos P."/>
            <person name="Goldman B.S."/>
            <person name="Ertesvaag H."/>
            <person name="Espin G."/>
            <person name="Rubio L.M."/>
            <person name="Valla S."/>
            <person name="Almeida N.F."/>
            <person name="Balasubramanian D."/>
            <person name="Cromes L."/>
            <person name="Curatti L."/>
            <person name="Du Z."/>
            <person name="Godsy E."/>
            <person name="Goodner B."/>
            <person name="Hellner-Burris K."/>
            <person name="Hernandez J.A."/>
            <person name="Houmiel K."/>
            <person name="Imperial J."/>
            <person name="Kennedy C."/>
            <person name="Larson T.J."/>
            <person name="Latreille P."/>
            <person name="Ligon L.S."/>
            <person name="Lu J."/>
            <person name="Maerk M."/>
            <person name="Miller N.M."/>
            <person name="Norton S."/>
            <person name="O'Carroll I.P."/>
            <person name="Paulsen I."/>
            <person name="Raulfs E.C."/>
            <person name="Roemer R."/>
            <person name="Rosser J."/>
            <person name="Segura D."/>
            <person name="Slater S."/>
            <person name="Stricklin S.L."/>
            <person name="Studholme D.J."/>
            <person name="Sun J."/>
            <person name="Viana C.J."/>
            <person name="Wallin E."/>
            <person name="Wang B."/>
            <person name="Wheeler C."/>
            <person name="Zhu H."/>
            <person name="Dean D.R."/>
            <person name="Dixon R."/>
            <person name="Wood D."/>
        </authorList>
    </citation>
    <scope>NUCLEOTIDE SEQUENCE [LARGE SCALE GENOMIC DNA]</scope>
    <source>
        <strain>DJ / ATCC BAA-1303</strain>
    </source>
</reference>
<gene>
    <name evidence="1" type="primary">rpmI</name>
    <name type="ordered locus">Avin_20440</name>
</gene>
<accession>C1DF44</accession>
<sequence length="64" mass="7448">MPKMKTKSGAKKRFKPTASGFKHKHAFKSHILTKMTTKRKRQLRGTSLMHPSDVAKVERMLRVR</sequence>
<organism>
    <name type="scientific">Azotobacter vinelandii (strain DJ / ATCC BAA-1303)</name>
    <dbReference type="NCBI Taxonomy" id="322710"/>
    <lineage>
        <taxon>Bacteria</taxon>
        <taxon>Pseudomonadati</taxon>
        <taxon>Pseudomonadota</taxon>
        <taxon>Gammaproteobacteria</taxon>
        <taxon>Pseudomonadales</taxon>
        <taxon>Pseudomonadaceae</taxon>
        <taxon>Azotobacter</taxon>
    </lineage>
</organism>
<comment type="similarity">
    <text evidence="1">Belongs to the bacterial ribosomal protein bL35 family.</text>
</comment>